<keyword id="KW-0049">Antioxidant</keyword>
<keyword id="KW-1015">Disulfide bond</keyword>
<keyword id="KW-1017">Isopeptide bond</keyword>
<keyword id="KW-0560">Oxidoreductase</keyword>
<keyword id="KW-0575">Peroxidase</keyword>
<keyword id="KW-0676">Redox-active center</keyword>
<keyword id="KW-1185">Reference proteome</keyword>
<keyword id="KW-0832">Ubl conjugation</keyword>
<accession>P9WIE1</accession>
<accession>L0T9V8</accession>
<accession>O53226</accession>
<accession>Q7D6Z5</accession>
<reference key="1">
    <citation type="journal article" date="1998" name="Nature">
        <title>Deciphering the biology of Mycobacterium tuberculosis from the complete genome sequence.</title>
        <authorList>
            <person name="Cole S.T."/>
            <person name="Brosch R."/>
            <person name="Parkhill J."/>
            <person name="Garnier T."/>
            <person name="Churcher C.M."/>
            <person name="Harris D.E."/>
            <person name="Gordon S.V."/>
            <person name="Eiglmeier K."/>
            <person name="Gas S."/>
            <person name="Barry C.E. III"/>
            <person name="Tekaia F."/>
            <person name="Badcock K."/>
            <person name="Basham D."/>
            <person name="Brown D."/>
            <person name="Chillingworth T."/>
            <person name="Connor R."/>
            <person name="Davies R.M."/>
            <person name="Devlin K."/>
            <person name="Feltwell T."/>
            <person name="Gentles S."/>
            <person name="Hamlin N."/>
            <person name="Holroyd S."/>
            <person name="Hornsby T."/>
            <person name="Jagels K."/>
            <person name="Krogh A."/>
            <person name="McLean J."/>
            <person name="Moule S."/>
            <person name="Murphy L.D."/>
            <person name="Oliver S."/>
            <person name="Osborne J."/>
            <person name="Quail M.A."/>
            <person name="Rajandream M.A."/>
            <person name="Rogers J."/>
            <person name="Rutter S."/>
            <person name="Seeger K."/>
            <person name="Skelton S."/>
            <person name="Squares S."/>
            <person name="Squares R."/>
            <person name="Sulston J.E."/>
            <person name="Taylor K."/>
            <person name="Whitehead S."/>
            <person name="Barrell B.G."/>
        </authorList>
    </citation>
    <scope>NUCLEOTIDE SEQUENCE [LARGE SCALE GENOMIC DNA]</scope>
    <source>
        <strain>ATCC 25618 / H37Rv</strain>
    </source>
</reference>
<reference key="2">
    <citation type="journal article" date="2010" name="PLoS ONE">
        <title>Prokaryotic ubiquitin-like protein (Pup) proteome of Mycobacterium tuberculosis.</title>
        <authorList>
            <person name="Festa R.A."/>
            <person name="McAllister F."/>
            <person name="Pearce M.J."/>
            <person name="Mintseris J."/>
            <person name="Burns K.E."/>
            <person name="Gygi S.P."/>
            <person name="Darwin K.H."/>
        </authorList>
    </citation>
    <scope>PUPYLATION AT LYS-12 AND LYS-150</scope>
    <scope>IDENTIFICATION BY MASS SPECTROMETRY</scope>
    <source>
        <strain>ATCC 25618 / H37Rv</strain>
    </source>
</reference>
<reference key="3">
    <citation type="journal article" date="2011" name="Mol. Cell. Proteomics">
        <title>Proteogenomic analysis of Mycobacterium tuberculosis by high resolution mass spectrometry.</title>
        <authorList>
            <person name="Kelkar D.S."/>
            <person name="Kumar D."/>
            <person name="Kumar P."/>
            <person name="Balakrishnan L."/>
            <person name="Muthusamy B."/>
            <person name="Yadav A.K."/>
            <person name="Shrivastava P."/>
            <person name="Marimuthu A."/>
            <person name="Anand S."/>
            <person name="Sundaram H."/>
            <person name="Kingsbury R."/>
            <person name="Harsha H.C."/>
            <person name="Nair B."/>
            <person name="Prasad T.S."/>
            <person name="Chauhan D.S."/>
            <person name="Katoch K."/>
            <person name="Katoch V.M."/>
            <person name="Kumar P."/>
            <person name="Chaerkady R."/>
            <person name="Ramachandran S."/>
            <person name="Dash D."/>
            <person name="Pandey A."/>
        </authorList>
    </citation>
    <scope>IDENTIFICATION BY MASS SPECTROMETRY [LARGE SCALE ANALYSIS]</scope>
    <source>
        <strain>ATCC 25618 / H37Rv</strain>
    </source>
</reference>
<gene>
    <name type="primary">bcp</name>
    <name type="synonym">bcp2</name>
    <name type="ordered locus">Rv2521</name>
</gene>
<protein>
    <recommendedName>
        <fullName>Putative peroxiredoxin Rv2521</fullName>
        <ecNumber evidence="1">1.11.1.24</ecNumber>
    </recommendedName>
    <alternativeName>
        <fullName>Bacterioferritin comigratory protein</fullName>
    </alternativeName>
    <alternativeName>
        <fullName>Thioredoxin peroxidase</fullName>
    </alternativeName>
    <alternativeName>
        <fullName evidence="4">Thioredoxin-dependent peroxiredoxin Rv2521</fullName>
    </alternativeName>
</protein>
<sequence length="157" mass="17077">MTKTTRLTPGDKAPAFTLPDADGNNVSLADYRGRRVIVYFYPAASTPGCTKQACDFRDNLGDFTTAGLNVVGISPDKPEKLATFRDAQGLTFPLLSDPDREVLTAWGAYGEKQMYGKTVQGVIRSTFVVDEDGKIVVAQYNVKATGHVAKLRRDLSV</sequence>
<proteinExistence type="evidence at protein level"/>
<feature type="chain" id="PRO_0000396096" description="Putative peroxiredoxin Rv2521">
    <location>
        <begin position="1"/>
        <end position="157"/>
    </location>
</feature>
<feature type="domain" description="Thioredoxin" evidence="2">
    <location>
        <begin position="7"/>
        <end position="157"/>
    </location>
</feature>
<feature type="active site" description="Cysteine sulfenic acid (-SOH) intermediate" evidence="1">
    <location>
        <position position="49"/>
    </location>
</feature>
<feature type="disulfide bond" description="Redox-active" evidence="1">
    <location>
        <begin position="49"/>
        <end position="54"/>
    </location>
</feature>
<feature type="cross-link" description="Isoglutamyl lysine isopeptide (Lys-Gln) (interchain with Q-Cter in protein Pup)" evidence="3">
    <location>
        <position position="12"/>
    </location>
</feature>
<feature type="cross-link" description="Isoglutamyl lysine isopeptide (Lys-Gln) (interchain with Q-Cter in protein Pup)" evidence="3">
    <location>
        <position position="150"/>
    </location>
</feature>
<name>BCP_MYCTU</name>
<dbReference type="EC" id="1.11.1.24" evidence="1"/>
<dbReference type="EMBL" id="AL123456">
    <property type="protein sequence ID" value="CCP45315.1"/>
    <property type="molecule type" value="Genomic_DNA"/>
</dbReference>
<dbReference type="PIR" id="F70870">
    <property type="entry name" value="F70870"/>
</dbReference>
<dbReference type="RefSeq" id="NP_217037.1">
    <property type="nucleotide sequence ID" value="NC_000962.3"/>
</dbReference>
<dbReference type="RefSeq" id="WP_003412944.1">
    <property type="nucleotide sequence ID" value="NZ_NVQJ01000032.1"/>
</dbReference>
<dbReference type="SMR" id="P9WIE1"/>
<dbReference type="FunCoup" id="P9WIE1">
    <property type="interactions" value="254"/>
</dbReference>
<dbReference type="STRING" id="83332.Rv2521"/>
<dbReference type="PaxDb" id="83332-Rv2521"/>
<dbReference type="GeneID" id="887694"/>
<dbReference type="KEGG" id="mtu:Rv2521"/>
<dbReference type="KEGG" id="mtv:RVBD_2521"/>
<dbReference type="TubercuList" id="Rv2521"/>
<dbReference type="eggNOG" id="COG1225">
    <property type="taxonomic scope" value="Bacteria"/>
</dbReference>
<dbReference type="InParanoid" id="P9WIE1"/>
<dbReference type="OrthoDB" id="9812811at2"/>
<dbReference type="PhylomeDB" id="P9WIE1"/>
<dbReference type="Proteomes" id="UP000001584">
    <property type="component" value="Chromosome"/>
</dbReference>
<dbReference type="GO" id="GO:0005737">
    <property type="term" value="C:cytoplasm"/>
    <property type="evidence" value="ECO:0000318"/>
    <property type="project" value="GO_Central"/>
</dbReference>
<dbReference type="GO" id="GO:0005829">
    <property type="term" value="C:cytosol"/>
    <property type="evidence" value="ECO:0007005"/>
    <property type="project" value="MTBBASE"/>
</dbReference>
<dbReference type="GO" id="GO:0005886">
    <property type="term" value="C:plasma membrane"/>
    <property type="evidence" value="ECO:0007005"/>
    <property type="project" value="MTBBASE"/>
</dbReference>
<dbReference type="GO" id="GO:0008379">
    <property type="term" value="F:thioredoxin peroxidase activity"/>
    <property type="evidence" value="ECO:0000318"/>
    <property type="project" value="GO_Central"/>
</dbReference>
<dbReference type="GO" id="GO:0045454">
    <property type="term" value="P:cell redox homeostasis"/>
    <property type="evidence" value="ECO:0000318"/>
    <property type="project" value="GO_Central"/>
</dbReference>
<dbReference type="GO" id="GO:0034599">
    <property type="term" value="P:cellular response to oxidative stress"/>
    <property type="evidence" value="ECO:0000318"/>
    <property type="project" value="GO_Central"/>
</dbReference>
<dbReference type="CDD" id="cd03017">
    <property type="entry name" value="PRX_BCP"/>
    <property type="match status" value="1"/>
</dbReference>
<dbReference type="FunFam" id="3.40.30.10:FF:000007">
    <property type="entry name" value="Thioredoxin-dependent thiol peroxidase"/>
    <property type="match status" value="1"/>
</dbReference>
<dbReference type="Gene3D" id="3.40.30.10">
    <property type="entry name" value="Glutaredoxin"/>
    <property type="match status" value="1"/>
</dbReference>
<dbReference type="InterPro" id="IPR000866">
    <property type="entry name" value="AhpC/TSA"/>
</dbReference>
<dbReference type="InterPro" id="IPR024706">
    <property type="entry name" value="Peroxiredoxin_AhpC-typ"/>
</dbReference>
<dbReference type="InterPro" id="IPR050924">
    <property type="entry name" value="Peroxiredoxin_BCP/PrxQ"/>
</dbReference>
<dbReference type="InterPro" id="IPR036249">
    <property type="entry name" value="Thioredoxin-like_sf"/>
</dbReference>
<dbReference type="InterPro" id="IPR013766">
    <property type="entry name" value="Thioredoxin_domain"/>
</dbReference>
<dbReference type="NCBIfam" id="NF006960">
    <property type="entry name" value="PRK09437.1"/>
    <property type="match status" value="1"/>
</dbReference>
<dbReference type="PANTHER" id="PTHR42801:SF4">
    <property type="entry name" value="AHPC_TSA FAMILY PROTEIN"/>
    <property type="match status" value="1"/>
</dbReference>
<dbReference type="PANTHER" id="PTHR42801">
    <property type="entry name" value="THIOREDOXIN-DEPENDENT PEROXIDE REDUCTASE"/>
    <property type="match status" value="1"/>
</dbReference>
<dbReference type="Pfam" id="PF00578">
    <property type="entry name" value="AhpC-TSA"/>
    <property type="match status" value="1"/>
</dbReference>
<dbReference type="PIRSF" id="PIRSF000239">
    <property type="entry name" value="AHPC"/>
    <property type="match status" value="1"/>
</dbReference>
<dbReference type="SUPFAM" id="SSF52833">
    <property type="entry name" value="Thioredoxin-like"/>
    <property type="match status" value="1"/>
</dbReference>
<dbReference type="PROSITE" id="PS51352">
    <property type="entry name" value="THIOREDOXIN_2"/>
    <property type="match status" value="1"/>
</dbReference>
<organism>
    <name type="scientific">Mycobacterium tuberculosis (strain ATCC 25618 / H37Rv)</name>
    <dbReference type="NCBI Taxonomy" id="83332"/>
    <lineage>
        <taxon>Bacteria</taxon>
        <taxon>Bacillati</taxon>
        <taxon>Actinomycetota</taxon>
        <taxon>Actinomycetes</taxon>
        <taxon>Mycobacteriales</taxon>
        <taxon>Mycobacteriaceae</taxon>
        <taxon>Mycobacterium</taxon>
        <taxon>Mycobacterium tuberculosis complex</taxon>
    </lineage>
</organism>
<comment type="function">
    <text evidence="1">Thiol-specific peroxidase that catalyzes the reduction of hydrogen peroxide and organic hydroperoxides to water and alcohols, respectively. Plays a role in cell protection against oxidative stress by detoxifying peroxides and as sensor of hydrogen peroxide-mediated signaling events.</text>
</comment>
<comment type="catalytic activity">
    <reaction evidence="1">
        <text>a hydroperoxide + [thioredoxin]-dithiol = an alcohol + [thioredoxin]-disulfide + H2O</text>
        <dbReference type="Rhea" id="RHEA:62620"/>
        <dbReference type="Rhea" id="RHEA-COMP:10698"/>
        <dbReference type="Rhea" id="RHEA-COMP:10700"/>
        <dbReference type="ChEBI" id="CHEBI:15377"/>
        <dbReference type="ChEBI" id="CHEBI:29950"/>
        <dbReference type="ChEBI" id="CHEBI:30879"/>
        <dbReference type="ChEBI" id="CHEBI:35924"/>
        <dbReference type="ChEBI" id="CHEBI:50058"/>
        <dbReference type="EC" id="1.11.1.24"/>
    </reaction>
</comment>
<comment type="subunit">
    <text evidence="1">Monomer.</text>
</comment>
<comment type="miscellaneous">
    <text evidence="1">The active site is a conserved redox-active cysteine residue, the peroxidatic cysteine (C(P)), which makes the nucleophilic attack on the peroxide substrate. The peroxide oxidizes the C(P)-SH to cysteine sulfenic acid (C(P)-SOH), which then reacts with another cysteine residue, the resolving cysteine (C(R)), to form a disulfide bridge. The disulfide is subsequently reduced by an appropriate electron donor to complete the catalytic cycle. In this atypical 2-Cys peroxiredoxin, C(R) is present in the same subunit to form an intramolecular disulfide. The disulfide is subsequently reduced by thioredoxin.</text>
</comment>
<comment type="similarity">
    <text evidence="4">Belongs to the peroxiredoxin family. BCP/PrxQ subfamily.</text>
</comment>
<evidence type="ECO:0000250" key="1">
    <source>
        <dbReference type="UniProtKB" id="P0AE52"/>
    </source>
</evidence>
<evidence type="ECO:0000255" key="2">
    <source>
        <dbReference type="PROSITE-ProRule" id="PRU00691"/>
    </source>
</evidence>
<evidence type="ECO:0000269" key="3">
    <source>
    </source>
</evidence>
<evidence type="ECO:0000305" key="4"/>